<dbReference type="EMBL" id="GT029182">
    <property type="status" value="NOT_ANNOTATED_CDS"/>
    <property type="molecule type" value="mRNA"/>
</dbReference>
<dbReference type="SMR" id="P0CJ09"/>
<dbReference type="GO" id="GO:0005576">
    <property type="term" value="C:extracellular region"/>
    <property type="evidence" value="ECO:0007669"/>
    <property type="project" value="UniProtKB-SubCell"/>
</dbReference>
<evidence type="ECO:0000250" key="1"/>
<evidence type="ECO:0000255" key="2"/>
<evidence type="ECO:0000305" key="3"/>
<organism>
    <name type="scientific">Lychas mucronatus</name>
    <name type="common">Chinese swimming scorpion</name>
    <dbReference type="NCBI Taxonomy" id="172552"/>
    <lineage>
        <taxon>Eukaryota</taxon>
        <taxon>Metazoa</taxon>
        <taxon>Ecdysozoa</taxon>
        <taxon>Arthropoda</taxon>
        <taxon>Chelicerata</taxon>
        <taxon>Arachnida</taxon>
        <taxon>Scorpiones</taxon>
        <taxon>Buthida</taxon>
        <taxon>Buthoidea</taxon>
        <taxon>Buthidae</taxon>
        <taxon>Lychas</taxon>
    </lineage>
</organism>
<name>VP184_LYCMC</name>
<comment type="subcellular location">
    <subcellularLocation>
        <location evidence="1">Secreted</location>
    </subcellularLocation>
</comment>
<comment type="tissue specificity">
    <text evidence="3">Expressed by the venom gland.</text>
</comment>
<comment type="PTM">
    <text evidence="1">Contains 3 disulfide bonds.</text>
</comment>
<feature type="signal peptide" evidence="2">
    <location>
        <begin position="1"/>
        <end position="21"/>
    </location>
</feature>
<feature type="chain" id="PRO_0000403901" description="Venom protein 184">
    <location>
        <begin position="22"/>
        <end position="113"/>
    </location>
</feature>
<sequence>MKTTLIFCILGIVIPTAVVSSQDFCGLSQQEREDYWECVERGMSADELNQAKLFLECINKQSAVELLAFFCNADSIEDSIEKEEFRLLFAECLKSHPASFNAGNESCLKEARK</sequence>
<accession>P0CJ09</accession>
<reference key="1">
    <citation type="journal article" date="2010" name="BMC Genomics">
        <title>Comparative venom gland transcriptome analysis of the scorpion Lychas mucronatus reveals intraspecific toxic gene diversity and new venomous components.</title>
        <authorList>
            <person name="Zhao R."/>
            <person name="Ma Y."/>
            <person name="He Y."/>
            <person name="Di Z."/>
            <person name="Wu Y.-L."/>
            <person name="Cao Z.-J."/>
            <person name="Li W.-X."/>
        </authorList>
    </citation>
    <scope>NUCLEOTIDE SEQUENCE [MRNA]</scope>
    <source>
        <strain>Yunnan</strain>
        <tissue>Venom gland</tissue>
    </source>
</reference>
<proteinExistence type="inferred from homology"/>
<keyword id="KW-1015">Disulfide bond</keyword>
<keyword id="KW-0964">Secreted</keyword>
<keyword id="KW-0732">Signal</keyword>
<protein>
    <recommendedName>
        <fullName>Venom protein 184</fullName>
    </recommendedName>
</protein>